<proteinExistence type="inferred from homology"/>
<reference key="1">
    <citation type="journal article" date="2009" name="Genome Biol.">
        <title>Genomic and genetic analyses of diversity and plant interactions of Pseudomonas fluorescens.</title>
        <authorList>
            <person name="Silby M.W."/>
            <person name="Cerdeno-Tarraga A.M."/>
            <person name="Vernikos G.S."/>
            <person name="Giddens S.R."/>
            <person name="Jackson R.W."/>
            <person name="Preston G.M."/>
            <person name="Zhang X.-X."/>
            <person name="Moon C.D."/>
            <person name="Gehrig S.M."/>
            <person name="Godfrey S.A.C."/>
            <person name="Knight C.G."/>
            <person name="Malone J.G."/>
            <person name="Robinson Z."/>
            <person name="Spiers A.J."/>
            <person name="Harris S."/>
            <person name="Challis G.L."/>
            <person name="Yaxley A.M."/>
            <person name="Harris D."/>
            <person name="Seeger K."/>
            <person name="Murphy L."/>
            <person name="Rutter S."/>
            <person name="Squares R."/>
            <person name="Quail M.A."/>
            <person name="Saunders E."/>
            <person name="Mavromatis K."/>
            <person name="Brettin T.S."/>
            <person name="Bentley S.D."/>
            <person name="Hothersall J."/>
            <person name="Stephens E."/>
            <person name="Thomas C.M."/>
            <person name="Parkhill J."/>
            <person name="Levy S.B."/>
            <person name="Rainey P.B."/>
            <person name="Thomson N.R."/>
        </authorList>
    </citation>
    <scope>NUCLEOTIDE SEQUENCE [LARGE SCALE GENOMIC DNA]</scope>
    <source>
        <strain>Pf0-1</strain>
    </source>
</reference>
<comment type="function">
    <text evidence="1">Attaches a formyl group to the free amino group of methionyl-tRNA(fMet). The formyl group appears to play a dual role in the initiator identity of N-formylmethionyl-tRNA by promoting its recognition by IF2 and preventing the misappropriation of this tRNA by the elongation apparatus.</text>
</comment>
<comment type="catalytic activity">
    <reaction evidence="1">
        <text>L-methionyl-tRNA(fMet) + (6R)-10-formyltetrahydrofolate = N-formyl-L-methionyl-tRNA(fMet) + (6S)-5,6,7,8-tetrahydrofolate + H(+)</text>
        <dbReference type="Rhea" id="RHEA:24380"/>
        <dbReference type="Rhea" id="RHEA-COMP:9952"/>
        <dbReference type="Rhea" id="RHEA-COMP:9953"/>
        <dbReference type="ChEBI" id="CHEBI:15378"/>
        <dbReference type="ChEBI" id="CHEBI:57453"/>
        <dbReference type="ChEBI" id="CHEBI:78530"/>
        <dbReference type="ChEBI" id="CHEBI:78844"/>
        <dbReference type="ChEBI" id="CHEBI:195366"/>
        <dbReference type="EC" id="2.1.2.9"/>
    </reaction>
</comment>
<comment type="similarity">
    <text evidence="1">Belongs to the Fmt family.</text>
</comment>
<organism>
    <name type="scientific">Pseudomonas fluorescens (strain Pf0-1)</name>
    <dbReference type="NCBI Taxonomy" id="205922"/>
    <lineage>
        <taxon>Bacteria</taxon>
        <taxon>Pseudomonadati</taxon>
        <taxon>Pseudomonadota</taxon>
        <taxon>Gammaproteobacteria</taxon>
        <taxon>Pseudomonadales</taxon>
        <taxon>Pseudomonadaceae</taxon>
        <taxon>Pseudomonas</taxon>
    </lineage>
</organism>
<keyword id="KW-0648">Protein biosynthesis</keyword>
<keyword id="KW-0808">Transferase</keyword>
<feature type="chain" id="PRO_1000020135" description="Methionyl-tRNA formyltransferase">
    <location>
        <begin position="1"/>
        <end position="319"/>
    </location>
</feature>
<feature type="binding site" evidence="1">
    <location>
        <begin position="113"/>
        <end position="116"/>
    </location>
    <ligand>
        <name>(6S)-5,6,7,8-tetrahydrofolate</name>
        <dbReference type="ChEBI" id="CHEBI:57453"/>
    </ligand>
</feature>
<dbReference type="EC" id="2.1.2.9" evidence="1"/>
<dbReference type="EMBL" id="CP000094">
    <property type="protein sequence ID" value="ABA71760.1"/>
    <property type="molecule type" value="Genomic_DNA"/>
</dbReference>
<dbReference type="RefSeq" id="WP_011331745.1">
    <property type="nucleotide sequence ID" value="NC_007492.2"/>
</dbReference>
<dbReference type="SMR" id="Q3KKE6"/>
<dbReference type="KEGG" id="pfo:Pfl01_0016"/>
<dbReference type="eggNOG" id="COG0223">
    <property type="taxonomic scope" value="Bacteria"/>
</dbReference>
<dbReference type="HOGENOM" id="CLU_033347_1_2_6"/>
<dbReference type="Proteomes" id="UP000002704">
    <property type="component" value="Chromosome"/>
</dbReference>
<dbReference type="GO" id="GO:0005829">
    <property type="term" value="C:cytosol"/>
    <property type="evidence" value="ECO:0007669"/>
    <property type="project" value="TreeGrafter"/>
</dbReference>
<dbReference type="GO" id="GO:0004479">
    <property type="term" value="F:methionyl-tRNA formyltransferase activity"/>
    <property type="evidence" value="ECO:0007669"/>
    <property type="project" value="UniProtKB-UniRule"/>
</dbReference>
<dbReference type="CDD" id="cd08646">
    <property type="entry name" value="FMT_core_Met-tRNA-FMT_N"/>
    <property type="match status" value="1"/>
</dbReference>
<dbReference type="CDD" id="cd08704">
    <property type="entry name" value="Met_tRNA_FMT_C"/>
    <property type="match status" value="1"/>
</dbReference>
<dbReference type="FunFam" id="3.40.50.12230:FF:000001">
    <property type="entry name" value="Methionyl-tRNA formyltransferase"/>
    <property type="match status" value="1"/>
</dbReference>
<dbReference type="FunFam" id="3.40.50.170:FF:000003">
    <property type="entry name" value="Methionyl-tRNA formyltransferase"/>
    <property type="match status" value="1"/>
</dbReference>
<dbReference type="Gene3D" id="3.10.25.10">
    <property type="entry name" value="Formyl transferase, C-terminal domain"/>
    <property type="match status" value="1"/>
</dbReference>
<dbReference type="Gene3D" id="3.40.50.170">
    <property type="entry name" value="Formyl transferase, N-terminal domain"/>
    <property type="match status" value="1"/>
</dbReference>
<dbReference type="HAMAP" id="MF_00182">
    <property type="entry name" value="Formyl_trans"/>
    <property type="match status" value="1"/>
</dbReference>
<dbReference type="InterPro" id="IPR005794">
    <property type="entry name" value="Fmt"/>
</dbReference>
<dbReference type="InterPro" id="IPR005793">
    <property type="entry name" value="Formyl_trans_C"/>
</dbReference>
<dbReference type="InterPro" id="IPR037022">
    <property type="entry name" value="Formyl_trans_C_sf"/>
</dbReference>
<dbReference type="InterPro" id="IPR002376">
    <property type="entry name" value="Formyl_transf_N"/>
</dbReference>
<dbReference type="InterPro" id="IPR036477">
    <property type="entry name" value="Formyl_transf_N_sf"/>
</dbReference>
<dbReference type="InterPro" id="IPR011034">
    <property type="entry name" value="Formyl_transferase-like_C_sf"/>
</dbReference>
<dbReference type="InterPro" id="IPR001555">
    <property type="entry name" value="GART_AS"/>
</dbReference>
<dbReference type="InterPro" id="IPR044135">
    <property type="entry name" value="Met-tRNA-FMT_C"/>
</dbReference>
<dbReference type="InterPro" id="IPR041711">
    <property type="entry name" value="Met-tRNA-FMT_N"/>
</dbReference>
<dbReference type="NCBIfam" id="TIGR00460">
    <property type="entry name" value="fmt"/>
    <property type="match status" value="1"/>
</dbReference>
<dbReference type="PANTHER" id="PTHR11138">
    <property type="entry name" value="METHIONYL-TRNA FORMYLTRANSFERASE"/>
    <property type="match status" value="1"/>
</dbReference>
<dbReference type="PANTHER" id="PTHR11138:SF5">
    <property type="entry name" value="METHIONYL-TRNA FORMYLTRANSFERASE, MITOCHONDRIAL"/>
    <property type="match status" value="1"/>
</dbReference>
<dbReference type="Pfam" id="PF02911">
    <property type="entry name" value="Formyl_trans_C"/>
    <property type="match status" value="1"/>
</dbReference>
<dbReference type="Pfam" id="PF00551">
    <property type="entry name" value="Formyl_trans_N"/>
    <property type="match status" value="1"/>
</dbReference>
<dbReference type="SUPFAM" id="SSF50486">
    <property type="entry name" value="FMT C-terminal domain-like"/>
    <property type="match status" value="1"/>
</dbReference>
<dbReference type="SUPFAM" id="SSF53328">
    <property type="entry name" value="Formyltransferase"/>
    <property type="match status" value="1"/>
</dbReference>
<dbReference type="PROSITE" id="PS00373">
    <property type="entry name" value="GART"/>
    <property type="match status" value="1"/>
</dbReference>
<evidence type="ECO:0000255" key="1">
    <source>
        <dbReference type="HAMAP-Rule" id="MF_00182"/>
    </source>
</evidence>
<sequence>MTEPLRIVFAGTPEFAAEHLKALLDSPYEIVAVYTQPDRPAGRGQKLMPSPVKQLALENNIQVLQPPTLRNADAQAELAALKPDLMVVVAYGLILPQAVLDIPRLGCINSHASLLPRWRGAAPIQRAVEAGDAESGVTVMRMEAGLDTGPMLLKVVTPISAEDTGGSLHDRLAEMGPPAVVQAIAGLAAGTLEGEVQNDELATYAHKLNKDEARIDWSRPAVELERLVRAFNPWPITHSTLNGEALKVLAATLAEGKGAPGTILGASKDGLIVACGEQALCLTRLQLPGGKALNFSDLFNSRREKFATGIVLGAAVDAQ</sequence>
<gene>
    <name evidence="1" type="primary">fmt</name>
    <name type="ordered locus">Pfl01_0016</name>
</gene>
<protein>
    <recommendedName>
        <fullName evidence="1">Methionyl-tRNA formyltransferase</fullName>
        <ecNumber evidence="1">2.1.2.9</ecNumber>
    </recommendedName>
</protein>
<accession>Q3KKE6</accession>
<name>FMT_PSEPF</name>